<feature type="chain" id="PRO_0000237271" description="Large ribosomal subunit protein uL2">
    <location>
        <begin position="1"/>
        <end position="278"/>
    </location>
</feature>
<feature type="region of interest" description="Disordered" evidence="2">
    <location>
        <begin position="32"/>
        <end position="57"/>
    </location>
</feature>
<feature type="region of interest" description="Disordered" evidence="2">
    <location>
        <begin position="221"/>
        <end position="278"/>
    </location>
</feature>
<feature type="compositionally biased region" description="Basic residues" evidence="2">
    <location>
        <begin position="269"/>
        <end position="278"/>
    </location>
</feature>
<gene>
    <name evidence="1" type="primary">rplB</name>
    <name type="ordered locus">ZMO0520</name>
</gene>
<protein>
    <recommendedName>
        <fullName evidence="1">Large ribosomal subunit protein uL2</fullName>
    </recommendedName>
    <alternativeName>
        <fullName evidence="3">50S ribosomal protein L2</fullName>
    </alternativeName>
</protein>
<comment type="function">
    <text evidence="1">One of the primary rRNA binding proteins. Required for association of the 30S and 50S subunits to form the 70S ribosome, for tRNA binding and peptide bond formation. It has been suggested to have peptidyltransferase activity; this is somewhat controversial. Makes several contacts with the 16S rRNA in the 70S ribosome.</text>
</comment>
<comment type="subunit">
    <text evidence="1">Part of the 50S ribosomal subunit. Forms a bridge to the 30S subunit in the 70S ribosome.</text>
</comment>
<comment type="similarity">
    <text evidence="1">Belongs to the universal ribosomal protein uL2 family.</text>
</comment>
<accession>Q5NQ61</accession>
<reference key="1">
    <citation type="journal article" date="2005" name="Nat. Biotechnol.">
        <title>The genome sequence of the ethanologenic bacterium Zymomonas mobilis ZM4.</title>
        <authorList>
            <person name="Seo J.-S."/>
            <person name="Chong H."/>
            <person name="Park H.S."/>
            <person name="Yoon K.-O."/>
            <person name="Jung C."/>
            <person name="Kim J.J."/>
            <person name="Hong J.H."/>
            <person name="Kim H."/>
            <person name="Kim J.-H."/>
            <person name="Kil J.-I."/>
            <person name="Park C.J."/>
            <person name="Oh H.-M."/>
            <person name="Lee J.-S."/>
            <person name="Jin S.-J."/>
            <person name="Um H.-W."/>
            <person name="Lee H.-J."/>
            <person name="Oh S.-J."/>
            <person name="Kim J.Y."/>
            <person name="Kang H.L."/>
            <person name="Lee S.Y."/>
            <person name="Lee K.J."/>
            <person name="Kang H.S."/>
        </authorList>
    </citation>
    <scope>NUCLEOTIDE SEQUENCE [LARGE SCALE GENOMIC DNA]</scope>
    <source>
        <strain>ATCC 31821 / ZM4 / CP4</strain>
    </source>
</reference>
<sequence>MALKHYNPTSPARRGLILVDRSSLWKGSPVKALTEGKNKTGGRNNKGHRTSRGIGGGHKQKYRLVDFKRRKWDMPATVQRIEYDPNRSAFIALVEYEDKTLSYILAPQRLGVGDSIVASRKADVKPGNAMEIGQAPLGTIVHNIELKPSKGGQLARAAGAYAQIVGRDKGMVMIRLNSGEQRYIRSDCMVTVGAVSNSDNANQNFAKAGRNRWLGRRPLTRGVAKNPVDHPHGGGEGRTSGGRHPVTPWGKPTKGARTRSNKATDKFIIRSRHAKKKR</sequence>
<name>RL2_ZYMMO</name>
<proteinExistence type="inferred from homology"/>
<dbReference type="EMBL" id="AE008692">
    <property type="protein sequence ID" value="AAV89144.1"/>
    <property type="molecule type" value="Genomic_DNA"/>
</dbReference>
<dbReference type="RefSeq" id="WP_011240426.1">
    <property type="nucleotide sequence ID" value="NZ_CP035711.1"/>
</dbReference>
<dbReference type="SMR" id="Q5NQ61"/>
<dbReference type="STRING" id="264203.ZMO0520"/>
<dbReference type="GeneID" id="79904289"/>
<dbReference type="KEGG" id="zmo:ZMO0520"/>
<dbReference type="eggNOG" id="COG0090">
    <property type="taxonomic scope" value="Bacteria"/>
</dbReference>
<dbReference type="HOGENOM" id="CLU_036235_2_1_5"/>
<dbReference type="Proteomes" id="UP000001173">
    <property type="component" value="Chromosome"/>
</dbReference>
<dbReference type="GO" id="GO:0015934">
    <property type="term" value="C:large ribosomal subunit"/>
    <property type="evidence" value="ECO:0007669"/>
    <property type="project" value="InterPro"/>
</dbReference>
<dbReference type="GO" id="GO:0019843">
    <property type="term" value="F:rRNA binding"/>
    <property type="evidence" value="ECO:0007669"/>
    <property type="project" value="UniProtKB-UniRule"/>
</dbReference>
<dbReference type="GO" id="GO:0003735">
    <property type="term" value="F:structural constituent of ribosome"/>
    <property type="evidence" value="ECO:0007669"/>
    <property type="project" value="InterPro"/>
</dbReference>
<dbReference type="GO" id="GO:0016740">
    <property type="term" value="F:transferase activity"/>
    <property type="evidence" value="ECO:0007669"/>
    <property type="project" value="InterPro"/>
</dbReference>
<dbReference type="GO" id="GO:0002181">
    <property type="term" value="P:cytoplasmic translation"/>
    <property type="evidence" value="ECO:0007669"/>
    <property type="project" value="TreeGrafter"/>
</dbReference>
<dbReference type="FunFam" id="2.30.30.30:FF:000001">
    <property type="entry name" value="50S ribosomal protein L2"/>
    <property type="match status" value="1"/>
</dbReference>
<dbReference type="FunFam" id="4.10.950.10:FF:000001">
    <property type="entry name" value="50S ribosomal protein L2"/>
    <property type="match status" value="1"/>
</dbReference>
<dbReference type="Gene3D" id="2.30.30.30">
    <property type="match status" value="1"/>
</dbReference>
<dbReference type="Gene3D" id="2.40.50.140">
    <property type="entry name" value="Nucleic acid-binding proteins"/>
    <property type="match status" value="1"/>
</dbReference>
<dbReference type="Gene3D" id="4.10.950.10">
    <property type="entry name" value="Ribosomal protein L2, domain 3"/>
    <property type="match status" value="1"/>
</dbReference>
<dbReference type="HAMAP" id="MF_01320_B">
    <property type="entry name" value="Ribosomal_uL2_B"/>
    <property type="match status" value="1"/>
</dbReference>
<dbReference type="InterPro" id="IPR012340">
    <property type="entry name" value="NA-bd_OB-fold"/>
</dbReference>
<dbReference type="InterPro" id="IPR014722">
    <property type="entry name" value="Rib_uL2_dom2"/>
</dbReference>
<dbReference type="InterPro" id="IPR002171">
    <property type="entry name" value="Ribosomal_uL2"/>
</dbReference>
<dbReference type="InterPro" id="IPR005880">
    <property type="entry name" value="Ribosomal_uL2_bac/org-type"/>
</dbReference>
<dbReference type="InterPro" id="IPR022669">
    <property type="entry name" value="Ribosomal_uL2_C"/>
</dbReference>
<dbReference type="InterPro" id="IPR022671">
    <property type="entry name" value="Ribosomal_uL2_CS"/>
</dbReference>
<dbReference type="InterPro" id="IPR014726">
    <property type="entry name" value="Ribosomal_uL2_dom3"/>
</dbReference>
<dbReference type="InterPro" id="IPR022666">
    <property type="entry name" value="Ribosomal_uL2_RNA-bd_dom"/>
</dbReference>
<dbReference type="InterPro" id="IPR008991">
    <property type="entry name" value="Translation_prot_SH3-like_sf"/>
</dbReference>
<dbReference type="NCBIfam" id="TIGR01171">
    <property type="entry name" value="rplB_bact"/>
    <property type="match status" value="1"/>
</dbReference>
<dbReference type="PANTHER" id="PTHR13691:SF5">
    <property type="entry name" value="LARGE RIBOSOMAL SUBUNIT PROTEIN UL2M"/>
    <property type="match status" value="1"/>
</dbReference>
<dbReference type="PANTHER" id="PTHR13691">
    <property type="entry name" value="RIBOSOMAL PROTEIN L2"/>
    <property type="match status" value="1"/>
</dbReference>
<dbReference type="Pfam" id="PF00181">
    <property type="entry name" value="Ribosomal_L2"/>
    <property type="match status" value="1"/>
</dbReference>
<dbReference type="Pfam" id="PF03947">
    <property type="entry name" value="Ribosomal_L2_C"/>
    <property type="match status" value="1"/>
</dbReference>
<dbReference type="PIRSF" id="PIRSF002158">
    <property type="entry name" value="Ribosomal_L2"/>
    <property type="match status" value="1"/>
</dbReference>
<dbReference type="SMART" id="SM01383">
    <property type="entry name" value="Ribosomal_L2"/>
    <property type="match status" value="1"/>
</dbReference>
<dbReference type="SMART" id="SM01382">
    <property type="entry name" value="Ribosomal_L2_C"/>
    <property type="match status" value="1"/>
</dbReference>
<dbReference type="SUPFAM" id="SSF50249">
    <property type="entry name" value="Nucleic acid-binding proteins"/>
    <property type="match status" value="1"/>
</dbReference>
<dbReference type="SUPFAM" id="SSF50104">
    <property type="entry name" value="Translation proteins SH3-like domain"/>
    <property type="match status" value="1"/>
</dbReference>
<dbReference type="PROSITE" id="PS00467">
    <property type="entry name" value="RIBOSOMAL_L2"/>
    <property type="match status" value="1"/>
</dbReference>
<evidence type="ECO:0000255" key="1">
    <source>
        <dbReference type="HAMAP-Rule" id="MF_01320"/>
    </source>
</evidence>
<evidence type="ECO:0000256" key="2">
    <source>
        <dbReference type="SAM" id="MobiDB-lite"/>
    </source>
</evidence>
<evidence type="ECO:0000305" key="3"/>
<keyword id="KW-1185">Reference proteome</keyword>
<keyword id="KW-0687">Ribonucleoprotein</keyword>
<keyword id="KW-0689">Ribosomal protein</keyword>
<keyword id="KW-0694">RNA-binding</keyword>
<keyword id="KW-0699">rRNA-binding</keyword>
<organism>
    <name type="scientific">Zymomonas mobilis subsp. mobilis (strain ATCC 31821 / ZM4 / CP4)</name>
    <dbReference type="NCBI Taxonomy" id="264203"/>
    <lineage>
        <taxon>Bacteria</taxon>
        <taxon>Pseudomonadati</taxon>
        <taxon>Pseudomonadota</taxon>
        <taxon>Alphaproteobacteria</taxon>
        <taxon>Sphingomonadales</taxon>
        <taxon>Zymomonadaceae</taxon>
        <taxon>Zymomonas</taxon>
    </lineage>
</organism>